<evidence type="ECO:0000255" key="1">
    <source>
        <dbReference type="HAMAP-Rule" id="MF_00451"/>
    </source>
</evidence>
<keyword id="KW-0067">ATP-binding</keyword>
<keyword id="KW-0963">Cytoplasm</keyword>
<keyword id="KW-0418">Kinase</keyword>
<keyword id="KW-0460">Magnesium</keyword>
<keyword id="KW-0479">Metal-binding</keyword>
<keyword id="KW-0546">Nucleotide metabolism</keyword>
<keyword id="KW-0547">Nucleotide-binding</keyword>
<keyword id="KW-0597">Phosphoprotein</keyword>
<keyword id="KW-0808">Transferase</keyword>
<name>NDK_RHOPB</name>
<proteinExistence type="inferred from homology"/>
<sequence>MAIERTFSILKPDATKRNLTGAINALIEQAGLRIVAQKRIRMTRDQAETFYAVHKARPFFGELVDFMVSGPVVVQVLEGEGAVLKYRDVMGATDPSKAADGTIRKAHAQSIGENSVHGSDAPETAAIEIAQFFSGNEIVG</sequence>
<reference key="1">
    <citation type="submission" date="2006-03" db="EMBL/GenBank/DDBJ databases">
        <title>Complete sequence of Rhodopseudomonas palustris BisB18.</title>
        <authorList>
            <consortium name="US DOE Joint Genome Institute"/>
            <person name="Copeland A."/>
            <person name="Lucas S."/>
            <person name="Lapidus A."/>
            <person name="Barry K."/>
            <person name="Detter J.C."/>
            <person name="Glavina del Rio T."/>
            <person name="Hammon N."/>
            <person name="Israni S."/>
            <person name="Dalin E."/>
            <person name="Tice H."/>
            <person name="Pitluck S."/>
            <person name="Chain P."/>
            <person name="Malfatti S."/>
            <person name="Shin M."/>
            <person name="Vergez L."/>
            <person name="Schmutz J."/>
            <person name="Larimer F."/>
            <person name="Land M."/>
            <person name="Hauser L."/>
            <person name="Pelletier D.A."/>
            <person name="Kyrpides N."/>
            <person name="Anderson I."/>
            <person name="Oda Y."/>
            <person name="Harwood C.S."/>
            <person name="Richardson P."/>
        </authorList>
    </citation>
    <scope>NUCLEOTIDE SEQUENCE [LARGE SCALE GENOMIC DNA]</scope>
    <source>
        <strain>BisB18</strain>
    </source>
</reference>
<feature type="chain" id="PRO_0000242511" description="Nucleoside diphosphate kinase">
    <location>
        <begin position="1"/>
        <end position="140"/>
    </location>
</feature>
<feature type="active site" description="Pros-phosphohistidine intermediate" evidence="1">
    <location>
        <position position="117"/>
    </location>
</feature>
<feature type="binding site" evidence="1">
    <location>
        <position position="11"/>
    </location>
    <ligand>
        <name>ATP</name>
        <dbReference type="ChEBI" id="CHEBI:30616"/>
    </ligand>
</feature>
<feature type="binding site" evidence="1">
    <location>
        <position position="59"/>
    </location>
    <ligand>
        <name>ATP</name>
        <dbReference type="ChEBI" id="CHEBI:30616"/>
    </ligand>
</feature>
<feature type="binding site" evidence="1">
    <location>
        <position position="87"/>
    </location>
    <ligand>
        <name>ATP</name>
        <dbReference type="ChEBI" id="CHEBI:30616"/>
    </ligand>
</feature>
<feature type="binding site" evidence="1">
    <location>
        <position position="93"/>
    </location>
    <ligand>
        <name>ATP</name>
        <dbReference type="ChEBI" id="CHEBI:30616"/>
    </ligand>
</feature>
<feature type="binding site" evidence="1">
    <location>
        <position position="104"/>
    </location>
    <ligand>
        <name>ATP</name>
        <dbReference type="ChEBI" id="CHEBI:30616"/>
    </ligand>
</feature>
<feature type="binding site" evidence="1">
    <location>
        <position position="114"/>
    </location>
    <ligand>
        <name>ATP</name>
        <dbReference type="ChEBI" id="CHEBI:30616"/>
    </ligand>
</feature>
<organism>
    <name type="scientific">Rhodopseudomonas palustris (strain BisB18)</name>
    <dbReference type="NCBI Taxonomy" id="316056"/>
    <lineage>
        <taxon>Bacteria</taxon>
        <taxon>Pseudomonadati</taxon>
        <taxon>Pseudomonadota</taxon>
        <taxon>Alphaproteobacteria</taxon>
        <taxon>Hyphomicrobiales</taxon>
        <taxon>Nitrobacteraceae</taxon>
        <taxon>Rhodopseudomonas</taxon>
    </lineage>
</organism>
<dbReference type="EC" id="2.7.4.6" evidence="1"/>
<dbReference type="EMBL" id="CP000301">
    <property type="protein sequence ID" value="ABD87872.1"/>
    <property type="molecule type" value="Genomic_DNA"/>
</dbReference>
<dbReference type="SMR" id="Q215R4"/>
<dbReference type="STRING" id="316056.RPC_2318"/>
<dbReference type="KEGG" id="rpc:RPC_2318"/>
<dbReference type="eggNOG" id="COG0105">
    <property type="taxonomic scope" value="Bacteria"/>
</dbReference>
<dbReference type="HOGENOM" id="CLU_060216_8_1_5"/>
<dbReference type="OrthoDB" id="9801161at2"/>
<dbReference type="GO" id="GO:0005737">
    <property type="term" value="C:cytoplasm"/>
    <property type="evidence" value="ECO:0007669"/>
    <property type="project" value="UniProtKB-SubCell"/>
</dbReference>
<dbReference type="GO" id="GO:0005524">
    <property type="term" value="F:ATP binding"/>
    <property type="evidence" value="ECO:0007669"/>
    <property type="project" value="UniProtKB-UniRule"/>
</dbReference>
<dbReference type="GO" id="GO:0046872">
    <property type="term" value="F:metal ion binding"/>
    <property type="evidence" value="ECO:0007669"/>
    <property type="project" value="UniProtKB-KW"/>
</dbReference>
<dbReference type="GO" id="GO:0004550">
    <property type="term" value="F:nucleoside diphosphate kinase activity"/>
    <property type="evidence" value="ECO:0007669"/>
    <property type="project" value="UniProtKB-UniRule"/>
</dbReference>
<dbReference type="GO" id="GO:0006241">
    <property type="term" value="P:CTP biosynthetic process"/>
    <property type="evidence" value="ECO:0007669"/>
    <property type="project" value="UniProtKB-UniRule"/>
</dbReference>
<dbReference type="GO" id="GO:0006183">
    <property type="term" value="P:GTP biosynthetic process"/>
    <property type="evidence" value="ECO:0007669"/>
    <property type="project" value="UniProtKB-UniRule"/>
</dbReference>
<dbReference type="GO" id="GO:0006228">
    <property type="term" value="P:UTP biosynthetic process"/>
    <property type="evidence" value="ECO:0007669"/>
    <property type="project" value="UniProtKB-UniRule"/>
</dbReference>
<dbReference type="CDD" id="cd04413">
    <property type="entry name" value="NDPk_I"/>
    <property type="match status" value="1"/>
</dbReference>
<dbReference type="FunFam" id="3.30.70.141:FF:000039">
    <property type="entry name" value="Nucleoside diphosphate kinase B"/>
    <property type="match status" value="1"/>
</dbReference>
<dbReference type="Gene3D" id="3.30.70.141">
    <property type="entry name" value="Nucleoside diphosphate kinase-like domain"/>
    <property type="match status" value="1"/>
</dbReference>
<dbReference type="HAMAP" id="MF_00451">
    <property type="entry name" value="NDP_kinase"/>
    <property type="match status" value="1"/>
</dbReference>
<dbReference type="InterPro" id="IPR034907">
    <property type="entry name" value="NDK-like_dom"/>
</dbReference>
<dbReference type="InterPro" id="IPR036850">
    <property type="entry name" value="NDK-like_dom_sf"/>
</dbReference>
<dbReference type="InterPro" id="IPR001564">
    <property type="entry name" value="Nucleoside_diP_kinase"/>
</dbReference>
<dbReference type="InterPro" id="IPR023005">
    <property type="entry name" value="Nucleoside_diP_kinase_AS"/>
</dbReference>
<dbReference type="NCBIfam" id="NF001908">
    <property type="entry name" value="PRK00668.1"/>
    <property type="match status" value="1"/>
</dbReference>
<dbReference type="PANTHER" id="PTHR46161">
    <property type="entry name" value="NUCLEOSIDE DIPHOSPHATE KINASE"/>
    <property type="match status" value="1"/>
</dbReference>
<dbReference type="PANTHER" id="PTHR46161:SF3">
    <property type="entry name" value="NUCLEOSIDE DIPHOSPHATE KINASE DDB_G0292928-RELATED"/>
    <property type="match status" value="1"/>
</dbReference>
<dbReference type="Pfam" id="PF00334">
    <property type="entry name" value="NDK"/>
    <property type="match status" value="1"/>
</dbReference>
<dbReference type="PRINTS" id="PR01243">
    <property type="entry name" value="NUCDPKINASE"/>
</dbReference>
<dbReference type="SMART" id="SM00562">
    <property type="entry name" value="NDK"/>
    <property type="match status" value="1"/>
</dbReference>
<dbReference type="SUPFAM" id="SSF54919">
    <property type="entry name" value="Nucleoside diphosphate kinase, NDK"/>
    <property type="match status" value="1"/>
</dbReference>
<dbReference type="PROSITE" id="PS00469">
    <property type="entry name" value="NDPK"/>
    <property type="match status" value="1"/>
</dbReference>
<dbReference type="PROSITE" id="PS51374">
    <property type="entry name" value="NDPK_LIKE"/>
    <property type="match status" value="1"/>
</dbReference>
<gene>
    <name evidence="1" type="primary">ndk</name>
    <name type="ordered locus">RPC_2318</name>
</gene>
<accession>Q215R4</accession>
<protein>
    <recommendedName>
        <fullName evidence="1">Nucleoside diphosphate kinase</fullName>
        <shortName evidence="1">NDK</shortName>
        <shortName evidence="1">NDP kinase</shortName>
        <ecNumber evidence="1">2.7.4.6</ecNumber>
    </recommendedName>
    <alternativeName>
        <fullName evidence="1">Nucleoside-2-P kinase</fullName>
    </alternativeName>
</protein>
<comment type="function">
    <text evidence="1">Major role in the synthesis of nucleoside triphosphates other than ATP. The ATP gamma phosphate is transferred to the NDP beta phosphate via a ping-pong mechanism, using a phosphorylated active-site intermediate.</text>
</comment>
<comment type="catalytic activity">
    <reaction evidence="1">
        <text>a 2'-deoxyribonucleoside 5'-diphosphate + ATP = a 2'-deoxyribonucleoside 5'-triphosphate + ADP</text>
        <dbReference type="Rhea" id="RHEA:44640"/>
        <dbReference type="ChEBI" id="CHEBI:30616"/>
        <dbReference type="ChEBI" id="CHEBI:61560"/>
        <dbReference type="ChEBI" id="CHEBI:73316"/>
        <dbReference type="ChEBI" id="CHEBI:456216"/>
        <dbReference type="EC" id="2.7.4.6"/>
    </reaction>
</comment>
<comment type="catalytic activity">
    <reaction evidence="1">
        <text>a ribonucleoside 5'-diphosphate + ATP = a ribonucleoside 5'-triphosphate + ADP</text>
        <dbReference type="Rhea" id="RHEA:18113"/>
        <dbReference type="ChEBI" id="CHEBI:30616"/>
        <dbReference type="ChEBI" id="CHEBI:57930"/>
        <dbReference type="ChEBI" id="CHEBI:61557"/>
        <dbReference type="ChEBI" id="CHEBI:456216"/>
        <dbReference type="EC" id="2.7.4.6"/>
    </reaction>
</comment>
<comment type="cofactor">
    <cofactor evidence="1">
        <name>Mg(2+)</name>
        <dbReference type="ChEBI" id="CHEBI:18420"/>
    </cofactor>
</comment>
<comment type="subunit">
    <text evidence="1">Homotetramer.</text>
</comment>
<comment type="subcellular location">
    <subcellularLocation>
        <location evidence="1">Cytoplasm</location>
    </subcellularLocation>
</comment>
<comment type="similarity">
    <text evidence="1">Belongs to the NDK family.</text>
</comment>